<proteinExistence type="evidence at protein level"/>
<sequence>MTCGLVRIRLARFGRKNSPVYNIVVANSRKARDAKPIEVLGTYVPVPSPVTKRELKRGVVPIKDVKLDFDRTKYWIGVGAQPSETVTKLLRKAGILNDAWATSKNSNVNRKVVFERMETLE</sequence>
<reference key="1">
    <citation type="journal article" date="1997" name="Nature">
        <title>The nucleotide sequence of Saccharomyces cerevisiae chromosome XVI.</title>
        <authorList>
            <person name="Bussey H."/>
            <person name="Storms R.K."/>
            <person name="Ahmed A."/>
            <person name="Albermann K."/>
            <person name="Allen E."/>
            <person name="Ansorge W."/>
            <person name="Araujo R."/>
            <person name="Aparicio A."/>
            <person name="Barrell B.G."/>
            <person name="Badcock K."/>
            <person name="Benes V."/>
            <person name="Botstein D."/>
            <person name="Bowman S."/>
            <person name="Brueckner M."/>
            <person name="Carpenter J."/>
            <person name="Cherry J.M."/>
            <person name="Chung E."/>
            <person name="Churcher C.M."/>
            <person name="Coster F."/>
            <person name="Davis K."/>
            <person name="Davis R.W."/>
            <person name="Dietrich F.S."/>
            <person name="Delius H."/>
            <person name="DiPaolo T."/>
            <person name="Dubois E."/>
            <person name="Duesterhoeft A."/>
            <person name="Duncan M."/>
            <person name="Floeth M."/>
            <person name="Fortin N."/>
            <person name="Friesen J.D."/>
            <person name="Fritz C."/>
            <person name="Goffeau A."/>
            <person name="Hall J."/>
            <person name="Hebling U."/>
            <person name="Heumann K."/>
            <person name="Hilbert H."/>
            <person name="Hillier L.W."/>
            <person name="Hunicke-Smith S."/>
            <person name="Hyman R.W."/>
            <person name="Johnston M."/>
            <person name="Kalman S."/>
            <person name="Kleine K."/>
            <person name="Komp C."/>
            <person name="Kurdi O."/>
            <person name="Lashkari D."/>
            <person name="Lew H."/>
            <person name="Lin A."/>
            <person name="Lin D."/>
            <person name="Louis E.J."/>
            <person name="Marathe R."/>
            <person name="Messenguy F."/>
            <person name="Mewes H.-W."/>
            <person name="Mirtipati S."/>
            <person name="Moestl D."/>
            <person name="Mueller-Auer S."/>
            <person name="Namath A."/>
            <person name="Nentwich U."/>
            <person name="Oefner P."/>
            <person name="Pearson D."/>
            <person name="Petel F.X."/>
            <person name="Pohl T.M."/>
            <person name="Purnelle B."/>
            <person name="Rajandream M.A."/>
            <person name="Rechmann S."/>
            <person name="Rieger M."/>
            <person name="Riles L."/>
            <person name="Roberts D."/>
            <person name="Schaefer M."/>
            <person name="Scharfe M."/>
            <person name="Scherens B."/>
            <person name="Schramm S."/>
            <person name="Schroeder M."/>
            <person name="Sdicu A.-M."/>
            <person name="Tettelin H."/>
            <person name="Urrestarazu L.A."/>
            <person name="Ushinsky S."/>
            <person name="Vierendeels F."/>
            <person name="Vissers S."/>
            <person name="Voss H."/>
            <person name="Walsh S.V."/>
            <person name="Wambutt R."/>
            <person name="Wang Y."/>
            <person name="Wedler E."/>
            <person name="Wedler H."/>
            <person name="Winnett E."/>
            <person name="Zhong W.-W."/>
            <person name="Zollner A."/>
            <person name="Vo D.H."/>
            <person name="Hani J."/>
        </authorList>
    </citation>
    <scope>NUCLEOTIDE SEQUENCE [LARGE SCALE GENOMIC DNA]</scope>
    <source>
        <strain>ATCC 204508 / S288c</strain>
    </source>
</reference>
<reference key="2">
    <citation type="journal article" date="2014" name="G3 (Bethesda)">
        <title>The reference genome sequence of Saccharomyces cerevisiae: Then and now.</title>
        <authorList>
            <person name="Engel S.R."/>
            <person name="Dietrich F.S."/>
            <person name="Fisk D.G."/>
            <person name="Binkley G."/>
            <person name="Balakrishnan R."/>
            <person name="Costanzo M.C."/>
            <person name="Dwight S.S."/>
            <person name="Hitz B.C."/>
            <person name="Karra K."/>
            <person name="Nash R.S."/>
            <person name="Weng S."/>
            <person name="Wong E.D."/>
            <person name="Lloyd P."/>
            <person name="Skrzypek M.S."/>
            <person name="Miyasato S.R."/>
            <person name="Simison M."/>
            <person name="Cherry J.M."/>
        </authorList>
    </citation>
    <scope>GENOME REANNOTATION</scope>
    <source>
        <strain>ATCC 204508 / S288c</strain>
    </source>
</reference>
<reference key="3">
    <citation type="journal article" date="2002" name="Eur. J. Biochem.">
        <title>Tag-mediated isolation of yeast mitochondrial ribosome and mass spectrometric identification of its new components.</title>
        <authorList>
            <person name="Gan X."/>
            <person name="Kitakawa M."/>
            <person name="Yoshino K."/>
            <person name="Oshiro N."/>
            <person name="Yonezawa K."/>
            <person name="Isono K."/>
        </authorList>
    </citation>
    <scope>IDENTIFICATION IN THE MITOCHONDRIAL RIBOSOMAL SMALL COMPLEX</scope>
    <scope>IDENTIFICATION BY MASS SPECTROMETRY</scope>
</reference>
<reference key="4">
    <citation type="journal article" date="2003" name="Nature">
        <title>Global analysis of protein localization in budding yeast.</title>
        <authorList>
            <person name="Huh W.-K."/>
            <person name="Falvo J.V."/>
            <person name="Gerke L.C."/>
            <person name="Carroll A.S."/>
            <person name="Howson R.W."/>
            <person name="Weissman J.S."/>
            <person name="O'Shea E.K."/>
        </authorList>
    </citation>
    <scope>SUBCELLULAR LOCATION [LARGE SCALE ANALYSIS]</scope>
</reference>
<reference key="5">
    <citation type="journal article" date="2003" name="Proc. Natl. Acad. Sci. U.S.A.">
        <title>The proteome of Saccharomyces cerevisiae mitochondria.</title>
        <authorList>
            <person name="Sickmann A."/>
            <person name="Reinders J."/>
            <person name="Wagner Y."/>
            <person name="Joppich C."/>
            <person name="Zahedi R.P."/>
            <person name="Meyer H.E."/>
            <person name="Schoenfisch B."/>
            <person name="Perschil I."/>
            <person name="Chacinska A."/>
            <person name="Guiard B."/>
            <person name="Rehling P."/>
            <person name="Pfanner N."/>
            <person name="Meisinger C."/>
        </authorList>
    </citation>
    <scope>SUBCELLULAR LOCATION [LARGE SCALE ANALYSIS]</scope>
    <source>
        <strain>ATCC 76625 / YPH499</strain>
    </source>
</reference>
<reference key="6">
    <citation type="journal article" date="2015" name="Nat. Commun.">
        <title>Organization of the mitochondrial translation machinery studied in situ by cryoelectron tomography.</title>
        <authorList>
            <person name="Pfeffer S."/>
            <person name="Woellhaf M.W."/>
            <person name="Herrmann J.M."/>
            <person name="Forster F."/>
        </authorList>
    </citation>
    <scope>SUBCELLULAR LOCATION</scope>
</reference>
<reference key="7">
    <citation type="journal article" date="2017" name="Science">
        <title>The structure of the yeast mitochondrial ribosome.</title>
        <authorList>
            <person name="Desai N."/>
            <person name="Brown A."/>
            <person name="Amunts A."/>
            <person name="Ramakrishnan V."/>
        </authorList>
    </citation>
    <scope>STRUCTURE BY ELECTRON MICROSCOPY (3.25 ANGSTROMS)</scope>
    <scope>SUBUNIT</scope>
</reference>
<protein>
    <recommendedName>
        <fullName evidence="6">Small ribosomal subunit protein bS16m</fullName>
    </recommendedName>
    <alternativeName>
        <fullName>37S ribosomal protein S16, mitochondrial</fullName>
    </alternativeName>
</protein>
<keyword id="KW-0002">3D-structure</keyword>
<keyword id="KW-0496">Mitochondrion</keyword>
<keyword id="KW-1185">Reference proteome</keyword>
<keyword id="KW-0687">Ribonucleoprotein</keyword>
<keyword id="KW-0689">Ribosomal protein</keyword>
<dbReference type="EMBL" id="U33335">
    <property type="protein sequence ID" value="AAB68092.1"/>
    <property type="molecule type" value="Genomic_DNA"/>
</dbReference>
<dbReference type="EMBL" id="BK006949">
    <property type="protein sequence ID" value="DAA11415.1"/>
    <property type="molecule type" value="Genomic_DNA"/>
</dbReference>
<dbReference type="PIR" id="S59680">
    <property type="entry name" value="S59680"/>
</dbReference>
<dbReference type="RefSeq" id="NP_015312.1">
    <property type="nucleotide sequence ID" value="NM_001183827.1"/>
</dbReference>
<dbReference type="PDB" id="5MRC">
    <property type="method" value="EM"/>
    <property type="resolution" value="3.25 A"/>
    <property type="chains" value="PP=2-120"/>
</dbReference>
<dbReference type="PDB" id="5MRE">
    <property type="method" value="EM"/>
    <property type="resolution" value="3.75 A"/>
    <property type="chains" value="PP=2-120"/>
</dbReference>
<dbReference type="PDB" id="5MRF">
    <property type="method" value="EM"/>
    <property type="resolution" value="4.97 A"/>
    <property type="chains" value="PP=2-120"/>
</dbReference>
<dbReference type="PDB" id="8D8J">
    <property type="method" value="EM"/>
    <property type="resolution" value="3.80 A"/>
    <property type="chains" value="P=1-121"/>
</dbReference>
<dbReference type="PDB" id="8D8K">
    <property type="method" value="EM"/>
    <property type="resolution" value="3.13 A"/>
    <property type="chains" value="P=1-121"/>
</dbReference>
<dbReference type="PDB" id="8D8L">
    <property type="method" value="EM"/>
    <property type="resolution" value="2.60 A"/>
    <property type="chains" value="P=1-121"/>
</dbReference>
<dbReference type="PDB" id="8OM2">
    <property type="method" value="EM"/>
    <property type="resolution" value="2.57 A"/>
    <property type="chains" value="P=1-121"/>
</dbReference>
<dbReference type="PDB" id="8OM3">
    <property type="method" value="EM"/>
    <property type="resolution" value="2.87 A"/>
    <property type="chains" value="P=1-121"/>
</dbReference>
<dbReference type="PDB" id="8OM4">
    <property type="method" value="EM"/>
    <property type="resolution" value="2.32 A"/>
    <property type="chains" value="P=1-121"/>
</dbReference>
<dbReference type="PDBsum" id="5MRC"/>
<dbReference type="PDBsum" id="5MRE"/>
<dbReference type="PDBsum" id="5MRF"/>
<dbReference type="PDBsum" id="8D8J"/>
<dbReference type="PDBsum" id="8D8K"/>
<dbReference type="PDBsum" id="8D8L"/>
<dbReference type="PDBsum" id="8OM2"/>
<dbReference type="PDBsum" id="8OM3"/>
<dbReference type="PDBsum" id="8OM4"/>
<dbReference type="EMDB" id="EMD-16966"/>
<dbReference type="EMDB" id="EMD-16967"/>
<dbReference type="EMDB" id="EMD-16968"/>
<dbReference type="EMDB" id="EMD-27249"/>
<dbReference type="EMDB" id="EMD-27250"/>
<dbReference type="EMDB" id="EMD-27251"/>
<dbReference type="EMDB" id="EMD-3551"/>
<dbReference type="EMDB" id="EMD-3552"/>
<dbReference type="EMDB" id="EMD-3553"/>
<dbReference type="SMR" id="Q02608"/>
<dbReference type="BioGRID" id="36164">
    <property type="interactions" value="147"/>
</dbReference>
<dbReference type="ComplexPortal" id="CPX-1603">
    <property type="entry name" value="37S mitochondrial small ribosomal subunit"/>
</dbReference>
<dbReference type="DIP" id="DIP-4453N"/>
<dbReference type="FunCoup" id="Q02608">
    <property type="interactions" value="965"/>
</dbReference>
<dbReference type="IntAct" id="Q02608">
    <property type="interactions" value="40"/>
</dbReference>
<dbReference type="MINT" id="Q02608"/>
<dbReference type="STRING" id="4932.YPL013C"/>
<dbReference type="PaxDb" id="4932-YPL013C"/>
<dbReference type="PeptideAtlas" id="Q02608"/>
<dbReference type="EnsemblFungi" id="YPL013C_mRNA">
    <property type="protein sequence ID" value="YPL013C"/>
    <property type="gene ID" value="YPL013C"/>
</dbReference>
<dbReference type="GeneID" id="856094"/>
<dbReference type="KEGG" id="sce:YPL013C"/>
<dbReference type="AGR" id="SGD:S000005934"/>
<dbReference type="SGD" id="S000005934">
    <property type="gene designation" value="MRPS16"/>
</dbReference>
<dbReference type="VEuPathDB" id="FungiDB:YPL013C"/>
<dbReference type="eggNOG" id="KOG3419">
    <property type="taxonomic scope" value="Eukaryota"/>
</dbReference>
<dbReference type="GeneTree" id="ENSGT00940000176675"/>
<dbReference type="HOGENOM" id="CLU_100590_2_2_1"/>
<dbReference type="InParanoid" id="Q02608"/>
<dbReference type="OMA" id="GFYNPIA"/>
<dbReference type="OrthoDB" id="407221at2759"/>
<dbReference type="BioCyc" id="YEAST:G3O-33932-MONOMER"/>
<dbReference type="BioGRID-ORCS" id="856094">
    <property type="hits" value="2 hits in 10 CRISPR screens"/>
</dbReference>
<dbReference type="PRO" id="PR:Q02608"/>
<dbReference type="Proteomes" id="UP000002311">
    <property type="component" value="Chromosome XVI"/>
</dbReference>
<dbReference type="RNAct" id="Q02608">
    <property type="molecule type" value="protein"/>
</dbReference>
<dbReference type="GO" id="GO:0005743">
    <property type="term" value="C:mitochondrial inner membrane"/>
    <property type="evidence" value="ECO:0000303"/>
    <property type="project" value="ComplexPortal"/>
</dbReference>
<dbReference type="GO" id="GO:0005763">
    <property type="term" value="C:mitochondrial small ribosomal subunit"/>
    <property type="evidence" value="ECO:0000314"/>
    <property type="project" value="SGD"/>
</dbReference>
<dbReference type="GO" id="GO:0005739">
    <property type="term" value="C:mitochondrion"/>
    <property type="evidence" value="ECO:0007005"/>
    <property type="project" value="SGD"/>
</dbReference>
<dbReference type="GO" id="GO:0003735">
    <property type="term" value="F:structural constituent of ribosome"/>
    <property type="evidence" value="ECO:0000314"/>
    <property type="project" value="SGD"/>
</dbReference>
<dbReference type="GO" id="GO:0032543">
    <property type="term" value="P:mitochondrial translation"/>
    <property type="evidence" value="ECO:0000303"/>
    <property type="project" value="ComplexPortal"/>
</dbReference>
<dbReference type="FunFam" id="3.30.1320.10:FF:000013">
    <property type="entry name" value="Mitochondrial ribosomal protein"/>
    <property type="match status" value="1"/>
</dbReference>
<dbReference type="Gene3D" id="3.30.1320.10">
    <property type="match status" value="1"/>
</dbReference>
<dbReference type="HAMAP" id="MF_00385">
    <property type="entry name" value="Ribosomal_bS16"/>
    <property type="match status" value="1"/>
</dbReference>
<dbReference type="InterPro" id="IPR000307">
    <property type="entry name" value="Ribosomal_bS16"/>
</dbReference>
<dbReference type="InterPro" id="IPR020592">
    <property type="entry name" value="Ribosomal_bS16_CS"/>
</dbReference>
<dbReference type="InterPro" id="IPR023803">
    <property type="entry name" value="Ribosomal_bS16_dom_sf"/>
</dbReference>
<dbReference type="NCBIfam" id="TIGR00002">
    <property type="entry name" value="S16"/>
    <property type="match status" value="1"/>
</dbReference>
<dbReference type="PANTHER" id="PTHR12919">
    <property type="entry name" value="30S RIBOSOMAL PROTEIN S16"/>
    <property type="match status" value="1"/>
</dbReference>
<dbReference type="PANTHER" id="PTHR12919:SF20">
    <property type="entry name" value="SMALL RIBOSOMAL SUBUNIT PROTEIN BS16M"/>
    <property type="match status" value="1"/>
</dbReference>
<dbReference type="Pfam" id="PF00886">
    <property type="entry name" value="Ribosomal_S16"/>
    <property type="match status" value="1"/>
</dbReference>
<dbReference type="SUPFAM" id="SSF54565">
    <property type="entry name" value="Ribosomal protein S16"/>
    <property type="match status" value="1"/>
</dbReference>
<dbReference type="PROSITE" id="PS00732">
    <property type="entry name" value="RIBOSOMAL_S16"/>
    <property type="match status" value="1"/>
</dbReference>
<accession>Q02608</accession>
<accession>D6W3Z9</accession>
<evidence type="ECO:0000269" key="1">
    <source>
    </source>
</evidence>
<evidence type="ECO:0000269" key="2">
    <source>
    </source>
</evidence>
<evidence type="ECO:0000269" key="3">
    <source>
    </source>
</evidence>
<evidence type="ECO:0000269" key="4">
    <source>
    </source>
</evidence>
<evidence type="ECO:0000269" key="5">
    <source>
    </source>
</evidence>
<evidence type="ECO:0000303" key="6">
    <source>
    </source>
</evidence>
<evidence type="ECO:0000305" key="7"/>
<evidence type="ECO:0000305" key="8">
    <source>
    </source>
</evidence>
<evidence type="ECO:0000305" key="9">
    <source>
    </source>
</evidence>
<evidence type="ECO:0007829" key="10">
    <source>
        <dbReference type="PDB" id="8D8L"/>
    </source>
</evidence>
<organism>
    <name type="scientific">Saccharomyces cerevisiae (strain ATCC 204508 / S288c)</name>
    <name type="common">Baker's yeast</name>
    <dbReference type="NCBI Taxonomy" id="559292"/>
    <lineage>
        <taxon>Eukaryota</taxon>
        <taxon>Fungi</taxon>
        <taxon>Dikarya</taxon>
        <taxon>Ascomycota</taxon>
        <taxon>Saccharomycotina</taxon>
        <taxon>Saccharomycetes</taxon>
        <taxon>Saccharomycetales</taxon>
        <taxon>Saccharomycetaceae</taxon>
        <taxon>Saccharomyces</taxon>
    </lineage>
</organism>
<gene>
    <name type="primary">MRPS16</name>
    <name type="ordered locus">YPL013C</name>
    <name type="ORF">LPA4C</name>
</gene>
<name>RT16_YEAST</name>
<comment type="function">
    <text evidence="8 9">Component of the mitochondrial ribosome (mitoribosome), a dedicated translation machinery responsible for the synthesis of mitochondrial genome-encoded proteins, including at least some of the essential transmembrane subunits of the mitochondrial respiratory chain. The mitoribosomes are attached to the mitochondrial inner membrane and translation products are cotranslationally integrated into the membrane.</text>
</comment>
<comment type="subunit">
    <text evidence="1 5">Component of the mitochondrial small ribosomal subunit (mt-SSU). Mature yeast 74S mitochondrial ribosomes consist of a small (37S) and a large (54S) subunit. The 37S small subunit contains a 15S ribosomal RNA (15S mt-rRNA) and 34 different proteins. The 54S large subunit contains a 21S rRNA (21S mt-rRNA) and 46 different proteins.</text>
</comment>
<comment type="subcellular location">
    <subcellularLocation>
        <location evidence="2 3">Mitochondrion</location>
    </subcellularLocation>
    <text evidence="4">Mitoribosomes are tethered to the mitochondrial inner membrane and spatially aligned with the membrane insertion machinery through two distinct membrane contact sites, formed by the 21S rRNA expansion segment 96-ES1 and the inner membrane protein MBA1.</text>
</comment>
<comment type="similarity">
    <text evidence="7">Belongs to the bacterial ribosomal protein bS16 family.</text>
</comment>
<feature type="chain" id="PRO_0000167326" description="Small ribosomal subunit protein bS16m">
    <location>
        <begin position="1"/>
        <end position="121"/>
    </location>
</feature>
<feature type="strand" evidence="10">
    <location>
        <begin position="4"/>
        <end position="15"/>
    </location>
</feature>
<feature type="strand" evidence="10">
    <location>
        <begin position="20"/>
        <end position="30"/>
    </location>
</feature>
<feature type="strand" evidence="10">
    <location>
        <begin position="37"/>
        <end position="43"/>
    </location>
</feature>
<feature type="helix" evidence="10">
    <location>
        <begin position="52"/>
        <end position="57"/>
    </location>
</feature>
<feature type="strand" evidence="10">
    <location>
        <begin position="62"/>
        <end position="67"/>
    </location>
</feature>
<feature type="helix" evidence="10">
    <location>
        <begin position="69"/>
        <end position="77"/>
    </location>
</feature>
<feature type="helix" evidence="10">
    <location>
        <begin position="84"/>
        <end position="92"/>
    </location>
</feature>
<feature type="helix" evidence="10">
    <location>
        <begin position="98"/>
        <end position="100"/>
    </location>
</feature>
<feature type="turn" evidence="10">
    <location>
        <begin position="103"/>
        <end position="105"/>
    </location>
</feature>
<feature type="strand" evidence="10">
    <location>
        <begin position="112"/>
        <end position="114"/>
    </location>
</feature>
<feature type="strand" evidence="10">
    <location>
        <begin position="117"/>
        <end position="119"/>
    </location>
</feature>